<evidence type="ECO:0000255" key="1">
    <source>
        <dbReference type="PROSITE-ProRule" id="PRU10023"/>
    </source>
</evidence>
<evidence type="ECO:0000305" key="2"/>
<name>CHSB_PETHY</name>
<organism>
    <name type="scientific">Petunia hybrida</name>
    <name type="common">Petunia</name>
    <dbReference type="NCBI Taxonomy" id="4102"/>
    <lineage>
        <taxon>Eukaryota</taxon>
        <taxon>Viridiplantae</taxon>
        <taxon>Streptophyta</taxon>
        <taxon>Embryophyta</taxon>
        <taxon>Tracheophyta</taxon>
        <taxon>Spermatophyta</taxon>
        <taxon>Magnoliopsida</taxon>
        <taxon>eudicotyledons</taxon>
        <taxon>Gunneridae</taxon>
        <taxon>Pentapetalae</taxon>
        <taxon>asterids</taxon>
        <taxon>lamiids</taxon>
        <taxon>Solanales</taxon>
        <taxon>Solanaceae</taxon>
        <taxon>Petunioideae</taxon>
        <taxon>Petunia</taxon>
    </lineage>
</organism>
<comment type="function">
    <text>The primary product of this enzyme is 4,2',4',6'-tetrahydroxychalcone (also termed naringenin-chalcone or chalcone) which can under specific conditions spontaneously isomerize into naringenin.</text>
</comment>
<comment type="catalytic activity">
    <reaction evidence="1">
        <text>(E)-4-coumaroyl-CoA + 3 malonyl-CoA + 3 H(+) = 2',4,4',6'-tetrahydroxychalcone + 3 CO2 + 4 CoA</text>
        <dbReference type="Rhea" id="RHEA:11128"/>
        <dbReference type="ChEBI" id="CHEBI:15378"/>
        <dbReference type="ChEBI" id="CHEBI:15413"/>
        <dbReference type="ChEBI" id="CHEBI:16526"/>
        <dbReference type="ChEBI" id="CHEBI:57287"/>
        <dbReference type="ChEBI" id="CHEBI:57384"/>
        <dbReference type="ChEBI" id="CHEBI:85008"/>
        <dbReference type="EC" id="2.3.1.74"/>
    </reaction>
</comment>
<comment type="pathway">
    <text>Secondary metabolite biosynthesis; flavonoid biosynthesis.</text>
</comment>
<comment type="tissue specificity">
    <text>Expressed at low level in seedlings after illumination with UV light. No expression in flowers or tissue culture.</text>
</comment>
<comment type="similarity">
    <text evidence="2">Belongs to the thiolase-like superfamily. Chalcone/stilbene synthases family.</text>
</comment>
<dbReference type="EC" id="2.3.1.74"/>
<dbReference type="EMBL" id="X14592">
    <property type="protein sequence ID" value="CAA32732.1"/>
    <property type="molecule type" value="Genomic_DNA"/>
</dbReference>
<dbReference type="PIR" id="JS0311">
    <property type="entry name" value="SYPJCB"/>
</dbReference>
<dbReference type="SMR" id="P22924"/>
<dbReference type="UniPathway" id="UPA00154"/>
<dbReference type="GO" id="GO:0016210">
    <property type="term" value="F:naringenin-chalcone synthase activity"/>
    <property type="evidence" value="ECO:0007669"/>
    <property type="project" value="UniProtKB-EC"/>
</dbReference>
<dbReference type="GO" id="GO:0009813">
    <property type="term" value="P:flavonoid biosynthetic process"/>
    <property type="evidence" value="ECO:0007669"/>
    <property type="project" value="UniProtKB-UniPathway"/>
</dbReference>
<dbReference type="GO" id="GO:0030639">
    <property type="term" value="P:polyketide biosynthetic process"/>
    <property type="evidence" value="ECO:0007669"/>
    <property type="project" value="TreeGrafter"/>
</dbReference>
<dbReference type="CDD" id="cd00831">
    <property type="entry name" value="CHS_like"/>
    <property type="match status" value="1"/>
</dbReference>
<dbReference type="FunFam" id="3.40.47.10:FF:000014">
    <property type="entry name" value="Chalcone synthase 1"/>
    <property type="match status" value="1"/>
</dbReference>
<dbReference type="FunFam" id="3.40.47.10:FF:000025">
    <property type="entry name" value="Chalcone synthase 2"/>
    <property type="match status" value="1"/>
</dbReference>
<dbReference type="Gene3D" id="3.40.47.10">
    <property type="match status" value="2"/>
</dbReference>
<dbReference type="InterPro" id="IPR012328">
    <property type="entry name" value="Chalcone/stilbene_synt_C"/>
</dbReference>
<dbReference type="InterPro" id="IPR001099">
    <property type="entry name" value="Chalcone/stilbene_synt_N"/>
</dbReference>
<dbReference type="InterPro" id="IPR018088">
    <property type="entry name" value="Chalcone/stilbene_synthase_AS"/>
</dbReference>
<dbReference type="InterPro" id="IPR011141">
    <property type="entry name" value="Polyketide_synthase_type-III"/>
</dbReference>
<dbReference type="InterPro" id="IPR016039">
    <property type="entry name" value="Thiolase-like"/>
</dbReference>
<dbReference type="PANTHER" id="PTHR11877:SF104">
    <property type="entry name" value="CHALCONE SYNTHASE"/>
    <property type="match status" value="1"/>
</dbReference>
<dbReference type="PANTHER" id="PTHR11877">
    <property type="entry name" value="HYDROXYMETHYLGLUTARYL-COA SYNTHASE"/>
    <property type="match status" value="1"/>
</dbReference>
<dbReference type="Pfam" id="PF02797">
    <property type="entry name" value="Chal_sti_synt_C"/>
    <property type="match status" value="1"/>
</dbReference>
<dbReference type="Pfam" id="PF00195">
    <property type="entry name" value="Chal_sti_synt_N"/>
    <property type="match status" value="1"/>
</dbReference>
<dbReference type="PIRSF" id="PIRSF000451">
    <property type="entry name" value="PKS_III"/>
    <property type="match status" value="1"/>
</dbReference>
<dbReference type="SUPFAM" id="SSF53901">
    <property type="entry name" value="Thiolase-like"/>
    <property type="match status" value="2"/>
</dbReference>
<dbReference type="PROSITE" id="PS00441">
    <property type="entry name" value="CHALCONE_SYNTH"/>
    <property type="match status" value="1"/>
</dbReference>
<gene>
    <name type="primary">CHSB</name>
</gene>
<accession>P22924</accession>
<proteinExistence type="evidence at transcript level"/>
<feature type="chain" id="PRO_0000216030" description="Chalcone synthase B">
    <location>
        <begin position="1"/>
        <end position="392"/>
    </location>
</feature>
<feature type="active site" evidence="1">
    <location>
        <position position="167"/>
    </location>
</feature>
<protein>
    <recommendedName>
        <fullName>Chalcone synthase B</fullName>
        <ecNumber>2.3.1.74</ecNumber>
    </recommendedName>
    <alternativeName>
        <fullName>Naringenin-chalcone synthase B</fullName>
    </alternativeName>
</protein>
<keyword id="KW-0012">Acyltransferase</keyword>
<keyword id="KW-0284">Flavonoid biosynthesis</keyword>
<keyword id="KW-0808">Transferase</keyword>
<sequence>MKVENGQLQGWWAQRAEGPAKILAIGTATPFHWVDQNSYPDYYFRVTNSQHLVDLKEKFRRICSKTMIKKRHMFLTEELLRKNPTLCSHNEPSLDIRQDILVSEIPKLGKEAALKAIGEWGQPKSTITHLVFCTRSGVDMPGADCQLVKLLGLSPSVQRLMMYQQGCFAGGTMLRLAKDLAENNKGARVLVVCAESSAIGFRGPSEANVDNLIAQALFGDGAAALIIGSDPKPGLERPVFEIFSAAQTFVPNGDCHLALHLREMGLTFHCTKDVPPTIAKNVESCLIKAFEPLGISDWNSLFWILHPGGNAIVDQVESTLGLGPEKLRATRNILSEYGNLSSACCLFILDEIRKKSAREGMRTSGDGLDLGVLLSFGPGLTIETVVLRSVPI</sequence>
<reference key="1">
    <citation type="journal article" date="1989" name="Gene">
        <title>Cloning and molecular characterization of the chalcone synthase multigene family of Petunia hybrida.</title>
        <authorList>
            <person name="Koes R.E."/>
            <person name="Spelt C.E."/>
            <person name="van den Elzen P.J.M."/>
            <person name="Mol J.N.M."/>
        </authorList>
    </citation>
    <scope>NUCLEOTIDE SEQUENCE [GENOMIC DNA]</scope>
    <source>
        <strain>cv. Violet 30</strain>
        <tissue>Leaf</tissue>
    </source>
</reference>